<gene>
    <name evidence="1" type="primary">mutL</name>
    <name type="ordered locus">Acid345_3219</name>
</gene>
<evidence type="ECO:0000255" key="1">
    <source>
        <dbReference type="HAMAP-Rule" id="MF_00149"/>
    </source>
</evidence>
<protein>
    <recommendedName>
        <fullName evidence="1">DNA mismatch repair protein MutL</fullName>
    </recommendedName>
</protein>
<feature type="chain" id="PRO_1000076685" description="DNA mismatch repair protein MutL">
    <location>
        <begin position="1"/>
        <end position="647"/>
    </location>
</feature>
<sequence>MGRIHVLSEHVANKIAAGEVVERPASVVKELIENSLDAGAKRIRVHVEAGGKKLIHIVDDGIGMFRDDAMLAFERHATSKLKNPEDLLSISTLGFRGEALPSIASVARVRLETRANEEPSGTVLEIAGGKILKIEEAGLPLGTSIAIKDLFFNTPARKKFLKSESTELSHIASLVTHYALAHPEMHWELHSATNALLIAPPVATQSERIYQVFGNETLDQLIPLAAQIKLERIGLPKPPPWLRKNEDDEEEQTVEPGEVRLHGFISKPEIQKLNRNSIFVFVNGRLIRDRLVQHALTEAYRNILPPTLFPVVLLFLEMPYTEVDVNVHPSKTEVRFRQQSLVHDFVRDSVRAALSKARPIPQFISEIHAQPKASPSLTPGAQTAPAFALEAQEEPVLPERLQFGGDAISVEANAAVPVARFGAQTFGSHVAQQQTVPETSGCDYELPDLPAADAPLASLRPLGQIRESFILATSNEGLWIIDQHVAHERVLFEKVLKQRAAASVETQQLLMPLIVELTPGQQAVFTEIAEELHQNGFEVEPFGSRTFAVKAAPAGIRAEDIEKTLSEVLDSFEREQQAFNLEHAQSRIAATIACHAAIKVNMPLTQDKMEWLLAELAKTEHPMTCPHGRPIVLRYSVKDIQKAFKRI</sequence>
<accession>Q1ILN0</accession>
<comment type="function">
    <text evidence="1">This protein is involved in the repair of mismatches in DNA. It is required for dam-dependent methyl-directed DNA mismatch repair. May act as a 'molecular matchmaker', a protein that promotes the formation of a stable complex between two or more DNA-binding proteins in an ATP-dependent manner without itself being part of a final effector complex.</text>
</comment>
<comment type="similarity">
    <text evidence="1">Belongs to the DNA mismatch repair MutL/HexB family.</text>
</comment>
<proteinExistence type="inferred from homology"/>
<keyword id="KW-0227">DNA damage</keyword>
<keyword id="KW-0234">DNA repair</keyword>
<keyword id="KW-1185">Reference proteome</keyword>
<organism>
    <name type="scientific">Koribacter versatilis (strain Ellin345)</name>
    <dbReference type="NCBI Taxonomy" id="204669"/>
    <lineage>
        <taxon>Bacteria</taxon>
        <taxon>Pseudomonadati</taxon>
        <taxon>Acidobacteriota</taxon>
        <taxon>Terriglobia</taxon>
        <taxon>Terriglobales</taxon>
        <taxon>Candidatus Korobacteraceae</taxon>
        <taxon>Candidatus Korobacter</taxon>
    </lineage>
</organism>
<name>MUTL_KORVE</name>
<reference key="1">
    <citation type="journal article" date="2009" name="Appl. Environ. Microbiol.">
        <title>Three genomes from the phylum Acidobacteria provide insight into the lifestyles of these microorganisms in soils.</title>
        <authorList>
            <person name="Ward N.L."/>
            <person name="Challacombe J.F."/>
            <person name="Janssen P.H."/>
            <person name="Henrissat B."/>
            <person name="Coutinho P.M."/>
            <person name="Wu M."/>
            <person name="Xie G."/>
            <person name="Haft D.H."/>
            <person name="Sait M."/>
            <person name="Badger J."/>
            <person name="Barabote R.D."/>
            <person name="Bradley B."/>
            <person name="Brettin T.S."/>
            <person name="Brinkac L.M."/>
            <person name="Bruce D."/>
            <person name="Creasy T."/>
            <person name="Daugherty S.C."/>
            <person name="Davidsen T.M."/>
            <person name="DeBoy R.T."/>
            <person name="Detter J.C."/>
            <person name="Dodson R.J."/>
            <person name="Durkin A.S."/>
            <person name="Ganapathy A."/>
            <person name="Gwinn-Giglio M."/>
            <person name="Han C.S."/>
            <person name="Khouri H."/>
            <person name="Kiss H."/>
            <person name="Kothari S.P."/>
            <person name="Madupu R."/>
            <person name="Nelson K.E."/>
            <person name="Nelson W.C."/>
            <person name="Paulsen I."/>
            <person name="Penn K."/>
            <person name="Ren Q."/>
            <person name="Rosovitz M.J."/>
            <person name="Selengut J.D."/>
            <person name="Shrivastava S."/>
            <person name="Sullivan S.A."/>
            <person name="Tapia R."/>
            <person name="Thompson L.S."/>
            <person name="Watkins K.L."/>
            <person name="Yang Q."/>
            <person name="Yu C."/>
            <person name="Zafar N."/>
            <person name="Zhou L."/>
            <person name="Kuske C.R."/>
        </authorList>
    </citation>
    <scope>NUCLEOTIDE SEQUENCE [LARGE SCALE GENOMIC DNA]</scope>
    <source>
        <strain>Ellin345</strain>
    </source>
</reference>
<dbReference type="EMBL" id="CP000360">
    <property type="protein sequence ID" value="ABF42220.1"/>
    <property type="molecule type" value="Genomic_DNA"/>
</dbReference>
<dbReference type="RefSeq" id="WP_011524019.1">
    <property type="nucleotide sequence ID" value="NC_008009.1"/>
</dbReference>
<dbReference type="SMR" id="Q1ILN0"/>
<dbReference type="STRING" id="204669.Acid345_3219"/>
<dbReference type="EnsemblBacteria" id="ABF42220">
    <property type="protein sequence ID" value="ABF42220"/>
    <property type="gene ID" value="Acid345_3219"/>
</dbReference>
<dbReference type="KEGG" id="aba:Acid345_3219"/>
<dbReference type="eggNOG" id="COG0323">
    <property type="taxonomic scope" value="Bacteria"/>
</dbReference>
<dbReference type="HOGENOM" id="CLU_004131_4_2_0"/>
<dbReference type="OrthoDB" id="9763467at2"/>
<dbReference type="Proteomes" id="UP000002432">
    <property type="component" value="Chromosome"/>
</dbReference>
<dbReference type="GO" id="GO:0032300">
    <property type="term" value="C:mismatch repair complex"/>
    <property type="evidence" value="ECO:0007669"/>
    <property type="project" value="InterPro"/>
</dbReference>
<dbReference type="GO" id="GO:0005524">
    <property type="term" value="F:ATP binding"/>
    <property type="evidence" value="ECO:0007669"/>
    <property type="project" value="InterPro"/>
</dbReference>
<dbReference type="GO" id="GO:0016887">
    <property type="term" value="F:ATP hydrolysis activity"/>
    <property type="evidence" value="ECO:0007669"/>
    <property type="project" value="InterPro"/>
</dbReference>
<dbReference type="GO" id="GO:0140664">
    <property type="term" value="F:ATP-dependent DNA damage sensor activity"/>
    <property type="evidence" value="ECO:0007669"/>
    <property type="project" value="InterPro"/>
</dbReference>
<dbReference type="GO" id="GO:0030983">
    <property type="term" value="F:mismatched DNA binding"/>
    <property type="evidence" value="ECO:0007669"/>
    <property type="project" value="InterPro"/>
</dbReference>
<dbReference type="GO" id="GO:0006298">
    <property type="term" value="P:mismatch repair"/>
    <property type="evidence" value="ECO:0007669"/>
    <property type="project" value="UniProtKB-UniRule"/>
</dbReference>
<dbReference type="CDD" id="cd16926">
    <property type="entry name" value="HATPase_MutL-MLH-PMS-like"/>
    <property type="match status" value="1"/>
</dbReference>
<dbReference type="CDD" id="cd00782">
    <property type="entry name" value="MutL_Trans"/>
    <property type="match status" value="1"/>
</dbReference>
<dbReference type="FunFam" id="3.30.565.10:FF:000003">
    <property type="entry name" value="DNA mismatch repair endonuclease MutL"/>
    <property type="match status" value="1"/>
</dbReference>
<dbReference type="Gene3D" id="3.30.230.10">
    <property type="match status" value="1"/>
</dbReference>
<dbReference type="Gene3D" id="3.30.565.10">
    <property type="entry name" value="Histidine kinase-like ATPase, C-terminal domain"/>
    <property type="match status" value="1"/>
</dbReference>
<dbReference type="Gene3D" id="3.30.1540.20">
    <property type="entry name" value="MutL, C-terminal domain, dimerisation subdomain"/>
    <property type="match status" value="1"/>
</dbReference>
<dbReference type="Gene3D" id="3.30.1370.100">
    <property type="entry name" value="MutL, C-terminal domain, regulatory subdomain"/>
    <property type="match status" value="1"/>
</dbReference>
<dbReference type="HAMAP" id="MF_00149">
    <property type="entry name" value="DNA_mis_repair"/>
    <property type="match status" value="1"/>
</dbReference>
<dbReference type="InterPro" id="IPR014762">
    <property type="entry name" value="DNA_mismatch_repair_CS"/>
</dbReference>
<dbReference type="InterPro" id="IPR020667">
    <property type="entry name" value="DNA_mismatch_repair_MutL"/>
</dbReference>
<dbReference type="InterPro" id="IPR013507">
    <property type="entry name" value="DNA_mismatch_S5_2-like"/>
</dbReference>
<dbReference type="InterPro" id="IPR036890">
    <property type="entry name" value="HATPase_C_sf"/>
</dbReference>
<dbReference type="InterPro" id="IPR002099">
    <property type="entry name" value="MutL/Mlh/PMS"/>
</dbReference>
<dbReference type="InterPro" id="IPR038973">
    <property type="entry name" value="MutL/Mlh/Pms-like"/>
</dbReference>
<dbReference type="InterPro" id="IPR014790">
    <property type="entry name" value="MutL_C"/>
</dbReference>
<dbReference type="InterPro" id="IPR042120">
    <property type="entry name" value="MutL_C_dimsub"/>
</dbReference>
<dbReference type="InterPro" id="IPR042121">
    <property type="entry name" value="MutL_C_regsub"/>
</dbReference>
<dbReference type="InterPro" id="IPR037198">
    <property type="entry name" value="MutL_C_sf"/>
</dbReference>
<dbReference type="InterPro" id="IPR020568">
    <property type="entry name" value="Ribosomal_Su5_D2-typ_SF"/>
</dbReference>
<dbReference type="InterPro" id="IPR014721">
    <property type="entry name" value="Ribsml_uS5_D2-typ_fold_subgr"/>
</dbReference>
<dbReference type="NCBIfam" id="TIGR00585">
    <property type="entry name" value="mutl"/>
    <property type="match status" value="1"/>
</dbReference>
<dbReference type="PANTHER" id="PTHR10073">
    <property type="entry name" value="DNA MISMATCH REPAIR PROTEIN MLH, PMS, MUTL"/>
    <property type="match status" value="1"/>
</dbReference>
<dbReference type="PANTHER" id="PTHR10073:SF12">
    <property type="entry name" value="DNA MISMATCH REPAIR PROTEIN MLH1"/>
    <property type="match status" value="1"/>
</dbReference>
<dbReference type="Pfam" id="PF01119">
    <property type="entry name" value="DNA_mis_repair"/>
    <property type="match status" value="1"/>
</dbReference>
<dbReference type="Pfam" id="PF13589">
    <property type="entry name" value="HATPase_c_3"/>
    <property type="match status" value="1"/>
</dbReference>
<dbReference type="Pfam" id="PF08676">
    <property type="entry name" value="MutL_C"/>
    <property type="match status" value="1"/>
</dbReference>
<dbReference type="SMART" id="SM01340">
    <property type="entry name" value="DNA_mis_repair"/>
    <property type="match status" value="1"/>
</dbReference>
<dbReference type="SMART" id="SM00853">
    <property type="entry name" value="MutL_C"/>
    <property type="match status" value="1"/>
</dbReference>
<dbReference type="SUPFAM" id="SSF55874">
    <property type="entry name" value="ATPase domain of HSP90 chaperone/DNA topoisomerase II/histidine kinase"/>
    <property type="match status" value="1"/>
</dbReference>
<dbReference type="SUPFAM" id="SSF118116">
    <property type="entry name" value="DNA mismatch repair protein MutL"/>
    <property type="match status" value="1"/>
</dbReference>
<dbReference type="SUPFAM" id="SSF54211">
    <property type="entry name" value="Ribosomal protein S5 domain 2-like"/>
    <property type="match status" value="1"/>
</dbReference>
<dbReference type="PROSITE" id="PS00058">
    <property type="entry name" value="DNA_MISMATCH_REPAIR_1"/>
    <property type="match status" value="1"/>
</dbReference>